<organism>
    <name type="scientific">Lactococcus lactis subsp. lactis (strain IL1403)</name>
    <name type="common">Streptococcus lactis</name>
    <dbReference type="NCBI Taxonomy" id="272623"/>
    <lineage>
        <taxon>Bacteria</taxon>
        <taxon>Bacillati</taxon>
        <taxon>Bacillota</taxon>
        <taxon>Bacilli</taxon>
        <taxon>Lactobacillales</taxon>
        <taxon>Streptococcaceae</taxon>
        <taxon>Lactococcus</taxon>
    </lineage>
</organism>
<feature type="chain" id="PRO_0000138797" description="3-dehydroquinate dehydratase">
    <location>
        <begin position="1"/>
        <end position="226"/>
    </location>
</feature>
<feature type="active site" description="Proton donor/acceptor" evidence="1">
    <location>
        <position position="121"/>
    </location>
</feature>
<feature type="active site" description="Schiff-base intermediate with substrate" evidence="1">
    <location>
        <position position="146"/>
    </location>
</feature>
<feature type="binding site" evidence="1">
    <location>
        <begin position="33"/>
        <end position="35"/>
    </location>
    <ligand>
        <name>3-dehydroquinate</name>
        <dbReference type="ChEBI" id="CHEBI:32364"/>
    </ligand>
</feature>
<feature type="binding site" evidence="1">
    <location>
        <position position="65"/>
    </location>
    <ligand>
        <name>3-dehydroquinate</name>
        <dbReference type="ChEBI" id="CHEBI:32364"/>
    </ligand>
</feature>
<feature type="binding site" evidence="1">
    <location>
        <position position="188"/>
    </location>
    <ligand>
        <name>3-dehydroquinate</name>
        <dbReference type="ChEBI" id="CHEBI:32364"/>
    </ligand>
</feature>
<feature type="binding site" evidence="1">
    <location>
        <position position="207"/>
    </location>
    <ligand>
        <name>3-dehydroquinate</name>
        <dbReference type="ChEBI" id="CHEBI:32364"/>
    </ligand>
</feature>
<feature type="binding site" evidence="1">
    <location>
        <position position="211"/>
    </location>
    <ligand>
        <name>3-dehydroquinate</name>
        <dbReference type="ChEBI" id="CHEBI:32364"/>
    </ligand>
</feature>
<keyword id="KW-0028">Amino-acid biosynthesis</keyword>
<keyword id="KW-0057">Aromatic amino acid biosynthesis</keyword>
<keyword id="KW-0456">Lyase</keyword>
<keyword id="KW-1185">Reference proteome</keyword>
<keyword id="KW-0704">Schiff base</keyword>
<gene>
    <name evidence="1" type="primary">aroD</name>
    <name type="ordered locus">LL1642</name>
    <name type="ORF">L0062</name>
</gene>
<proteinExistence type="inferred from homology"/>
<dbReference type="EC" id="4.2.1.10" evidence="1"/>
<dbReference type="EMBL" id="AE005176">
    <property type="protein sequence ID" value="AAK05740.1"/>
    <property type="molecule type" value="Genomic_DNA"/>
</dbReference>
<dbReference type="PIR" id="B86830">
    <property type="entry name" value="B86830"/>
</dbReference>
<dbReference type="RefSeq" id="NP_267798.1">
    <property type="nucleotide sequence ID" value="NC_002662.1"/>
</dbReference>
<dbReference type="RefSeq" id="WP_003129440.1">
    <property type="nucleotide sequence ID" value="NC_002662.1"/>
</dbReference>
<dbReference type="SMR" id="Q9CF39"/>
<dbReference type="PaxDb" id="272623-L0062"/>
<dbReference type="EnsemblBacteria" id="AAK05740">
    <property type="protein sequence ID" value="AAK05740"/>
    <property type="gene ID" value="L0062"/>
</dbReference>
<dbReference type="KEGG" id="lla:L0062"/>
<dbReference type="PATRIC" id="fig|272623.7.peg.1764"/>
<dbReference type="eggNOG" id="COG0710">
    <property type="taxonomic scope" value="Bacteria"/>
</dbReference>
<dbReference type="HOGENOM" id="CLU_064444_0_0_9"/>
<dbReference type="OrthoDB" id="9813659at2"/>
<dbReference type="UniPathway" id="UPA00053">
    <property type="reaction ID" value="UER00086"/>
</dbReference>
<dbReference type="Proteomes" id="UP000002196">
    <property type="component" value="Chromosome"/>
</dbReference>
<dbReference type="GO" id="GO:0003855">
    <property type="term" value="F:3-dehydroquinate dehydratase activity"/>
    <property type="evidence" value="ECO:0007669"/>
    <property type="project" value="UniProtKB-UniRule"/>
</dbReference>
<dbReference type="GO" id="GO:0046279">
    <property type="term" value="P:3,4-dihydroxybenzoate biosynthetic process"/>
    <property type="evidence" value="ECO:0007669"/>
    <property type="project" value="UniProtKB-ARBA"/>
</dbReference>
<dbReference type="GO" id="GO:0008652">
    <property type="term" value="P:amino acid biosynthetic process"/>
    <property type="evidence" value="ECO:0007669"/>
    <property type="project" value="UniProtKB-KW"/>
</dbReference>
<dbReference type="GO" id="GO:0009073">
    <property type="term" value="P:aromatic amino acid family biosynthetic process"/>
    <property type="evidence" value="ECO:0007669"/>
    <property type="project" value="UniProtKB-KW"/>
</dbReference>
<dbReference type="GO" id="GO:0009423">
    <property type="term" value="P:chorismate biosynthetic process"/>
    <property type="evidence" value="ECO:0007669"/>
    <property type="project" value="UniProtKB-UniRule"/>
</dbReference>
<dbReference type="CDD" id="cd00502">
    <property type="entry name" value="DHQase_I"/>
    <property type="match status" value="1"/>
</dbReference>
<dbReference type="FunFam" id="3.20.20.70:FF:000047">
    <property type="entry name" value="3-dehydroquinate dehydratase"/>
    <property type="match status" value="1"/>
</dbReference>
<dbReference type="Gene3D" id="3.20.20.70">
    <property type="entry name" value="Aldolase class I"/>
    <property type="match status" value="1"/>
</dbReference>
<dbReference type="HAMAP" id="MF_00214">
    <property type="entry name" value="AroD"/>
    <property type="match status" value="1"/>
</dbReference>
<dbReference type="InterPro" id="IPR013785">
    <property type="entry name" value="Aldolase_TIM"/>
</dbReference>
<dbReference type="InterPro" id="IPR001381">
    <property type="entry name" value="DHquinase_I"/>
</dbReference>
<dbReference type="InterPro" id="IPR050146">
    <property type="entry name" value="Type-I_3-dehydroquinase"/>
</dbReference>
<dbReference type="NCBIfam" id="TIGR01093">
    <property type="entry name" value="aroD"/>
    <property type="match status" value="1"/>
</dbReference>
<dbReference type="PANTHER" id="PTHR43699">
    <property type="entry name" value="3-DEHYDROQUINATE DEHYDRATASE"/>
    <property type="match status" value="1"/>
</dbReference>
<dbReference type="PANTHER" id="PTHR43699:SF1">
    <property type="entry name" value="3-DEHYDROQUINATE DEHYDRATASE"/>
    <property type="match status" value="1"/>
</dbReference>
<dbReference type="Pfam" id="PF01487">
    <property type="entry name" value="DHquinase_I"/>
    <property type="match status" value="1"/>
</dbReference>
<dbReference type="SUPFAM" id="SSF51569">
    <property type="entry name" value="Aldolase"/>
    <property type="match status" value="1"/>
</dbReference>
<evidence type="ECO:0000255" key="1">
    <source>
        <dbReference type="HAMAP-Rule" id="MF_00214"/>
    </source>
</evidence>
<accession>Q9CF39</accession>
<name>AROD_LACLA</name>
<protein>
    <recommendedName>
        <fullName evidence="1">3-dehydroquinate dehydratase</fullName>
        <shortName evidence="1">3-dehydroquinase</shortName>
        <ecNumber evidence="1">4.2.1.10</ecNumber>
    </recommendedName>
    <alternativeName>
        <fullName evidence="1">Type I DHQase</fullName>
    </alternativeName>
    <alternativeName>
        <fullName evidence="1">Type I dehydroquinase</fullName>
        <shortName evidence="1">DHQ1</shortName>
    </alternativeName>
</protein>
<sequence>MRKTKIVVPIMLTELAELEKVSVSDYRTADIVEWRADFLSADEILEMAPKFFEKFKESKILFTLRTVREGGNIQVSEKKYLQILKEILTYNPAYIDVEFFTHGPSFAALKDFRDKMVLSYHNFDEVPSDLTNRLIKMHEEGTAFVKVAVMPERECDVLDLLQITRDMTLEYGDHFISMAMGDLGRLSRISGYLTGSCWTFASLENSSAPGQISLKETEYILDILEK</sequence>
<reference key="1">
    <citation type="journal article" date="2001" name="Genome Res.">
        <title>The complete genome sequence of the lactic acid bacterium Lactococcus lactis ssp. lactis IL1403.</title>
        <authorList>
            <person name="Bolotin A."/>
            <person name="Wincker P."/>
            <person name="Mauger S."/>
            <person name="Jaillon O."/>
            <person name="Malarme K."/>
            <person name="Weissenbach J."/>
            <person name="Ehrlich S.D."/>
            <person name="Sorokin A."/>
        </authorList>
    </citation>
    <scope>NUCLEOTIDE SEQUENCE [LARGE SCALE GENOMIC DNA]</scope>
    <source>
        <strain>IL1403</strain>
    </source>
</reference>
<comment type="function">
    <text evidence="1">Involved in the third step of the chorismate pathway, which leads to the biosynthesis of aromatic amino acids. Catalyzes the cis-dehydration of 3-dehydroquinate (DHQ) and introduces the first double bond of the aromatic ring to yield 3-dehydroshikimate.</text>
</comment>
<comment type="catalytic activity">
    <reaction evidence="1">
        <text>3-dehydroquinate = 3-dehydroshikimate + H2O</text>
        <dbReference type="Rhea" id="RHEA:21096"/>
        <dbReference type="ChEBI" id="CHEBI:15377"/>
        <dbReference type="ChEBI" id="CHEBI:16630"/>
        <dbReference type="ChEBI" id="CHEBI:32364"/>
        <dbReference type="EC" id="4.2.1.10"/>
    </reaction>
</comment>
<comment type="pathway">
    <text evidence="1">Metabolic intermediate biosynthesis; chorismate biosynthesis; chorismate from D-erythrose 4-phosphate and phosphoenolpyruvate: step 3/7.</text>
</comment>
<comment type="subunit">
    <text evidence="1">Homodimer.</text>
</comment>
<comment type="similarity">
    <text evidence="1">Belongs to the type-I 3-dehydroquinase family.</text>
</comment>